<protein>
    <recommendedName>
        <fullName>Proteinase inhibitor type-2 P303.51</fullName>
    </recommendedName>
    <alternativeName>
        <fullName>Proteinase inhibitor type II P303.51</fullName>
    </alternativeName>
</protein>
<comment type="similarity">
    <text evidence="3">Belongs to the protease inhibitor I20 (potato type II proteinase inhibitor) family.</text>
</comment>
<dbReference type="EMBL" id="L37519">
    <property type="protein sequence ID" value="AAA53278.1"/>
    <property type="molecule type" value="mRNA"/>
</dbReference>
<dbReference type="SMR" id="Q41488"/>
<dbReference type="MEROPS" id="I20.001"/>
<dbReference type="PaxDb" id="4113-PGSC0003DMT400011562"/>
<dbReference type="eggNOG" id="ENOG502R7RQ">
    <property type="taxonomic scope" value="Eukaryota"/>
</dbReference>
<dbReference type="InParanoid" id="Q41488"/>
<dbReference type="Proteomes" id="UP000011115">
    <property type="component" value="Unassembled WGS sequence"/>
</dbReference>
<dbReference type="ExpressionAtlas" id="Q41488">
    <property type="expression patterns" value="baseline and differential"/>
</dbReference>
<dbReference type="GO" id="GO:0004867">
    <property type="term" value="F:serine-type endopeptidase inhibitor activity"/>
    <property type="evidence" value="ECO:0007669"/>
    <property type="project" value="UniProtKB-KW"/>
</dbReference>
<dbReference type="Gene3D" id="3.30.60.30">
    <property type="match status" value="2"/>
</dbReference>
<dbReference type="InterPro" id="IPR003465">
    <property type="entry name" value="Prot_inh_I20"/>
</dbReference>
<dbReference type="InterPro" id="IPR051391">
    <property type="entry name" value="Protease_inhibitor_I20"/>
</dbReference>
<dbReference type="PANTHER" id="PTHR33832:SF23">
    <property type="entry name" value="PROTEINASE INHIBITOR TYPE-2 P303.51"/>
    <property type="match status" value="1"/>
</dbReference>
<dbReference type="PANTHER" id="PTHR33832">
    <property type="entry name" value="SERINE-TYPE ENDOPEPTIDASE INHIBITOR"/>
    <property type="match status" value="1"/>
</dbReference>
<dbReference type="Pfam" id="PF02428">
    <property type="entry name" value="Prot_inhib_II"/>
    <property type="match status" value="2"/>
</dbReference>
<dbReference type="SUPFAM" id="SSF100897">
    <property type="entry name" value="Plant proteinase inhibitors"/>
    <property type="match status" value="1"/>
</dbReference>
<keyword id="KW-1015">Disulfide bond</keyword>
<keyword id="KW-0646">Protease inhibitor</keyword>
<keyword id="KW-1185">Reference proteome</keyword>
<keyword id="KW-0677">Repeat</keyword>
<keyword id="KW-0722">Serine protease inhibitor</keyword>
<keyword id="KW-0732">Signal</keyword>
<proteinExistence type="evidence at transcript level"/>
<feature type="signal peptide" evidence="2">
    <location>
        <begin position="1"/>
        <end position="25"/>
    </location>
</feature>
<feature type="chain" id="PRO_0000025316" description="Proteinase inhibitor type-2 P303.51">
    <location>
        <begin position="26"/>
        <end position="154"/>
    </location>
</feature>
<feature type="repeat" description="1">
    <location>
        <begin position="31"/>
        <end position="87"/>
    </location>
</feature>
<feature type="repeat" description="2">
    <location>
        <begin position="88"/>
        <end position="147"/>
    </location>
</feature>
<feature type="site" description="Reactive bond for chymotrypsin" evidence="3">
    <location>
        <begin position="36"/>
        <end position="37"/>
    </location>
</feature>
<feature type="site" description="Reactive bond for trypsin" evidence="3">
    <location>
        <begin position="93"/>
        <end position="94"/>
    </location>
</feature>
<feature type="disulfide bond" evidence="1">
    <location>
        <begin position="34"/>
        <end position="122"/>
    </location>
</feature>
<feature type="disulfide bond" evidence="1">
    <location>
        <begin position="38"/>
        <end position="118"/>
    </location>
</feature>
<feature type="disulfide bond" evidence="1">
    <location>
        <begin position="46"/>
        <end position="128"/>
    </location>
</feature>
<feature type="disulfide bond" evidence="1">
    <location>
        <begin position="58"/>
        <end position="95"/>
    </location>
</feature>
<feature type="disulfide bond" evidence="1">
    <location>
        <begin position="61"/>
        <end position="79"/>
    </location>
</feature>
<feature type="disulfide bond" evidence="1">
    <location>
        <begin position="62"/>
        <end position="91"/>
    </location>
</feature>
<feature type="disulfide bond" evidence="1">
    <location>
        <begin position="68"/>
        <end position="104"/>
    </location>
</feature>
<feature type="disulfide bond" evidence="1">
    <location>
        <begin position="121"/>
        <end position="139"/>
    </location>
</feature>
<name>IP25_SOLTU</name>
<evidence type="ECO:0000250" key="1"/>
<evidence type="ECO:0000255" key="2"/>
<evidence type="ECO:0000305" key="3"/>
<reference key="1">
    <citation type="journal article" date="1995" name="Mol. Breed.">
        <title>Phage display of a double-headed proteinase inhibitor: analysis of the binding domains of potato proteinase inhibitor II.</title>
        <authorList>
            <person name="Jongsma M.A."/>
            <person name="Bakker P.L."/>
            <person name="Stiekema W.J."/>
            <person name="Bosch D.D."/>
        </authorList>
        <dbReference type="AGRICOLA" id="IND20549554"/>
    </citation>
    <scope>NUCLEOTIDE SEQUENCE [MRNA]</scope>
    <source>
        <strain>cv. Bintje</strain>
        <tissue>Tuber</tissue>
    </source>
</reference>
<sequence>MAVHKEVNFVAYLLIVLGLLVLVSAMEHVDAKACTLECGNLGFGICPRSEGSPENRICTNCCAGYKGCNYYSANGAFICEGESDPKKPKACPRNCDPHIAYSKCPRSEGKSLIYPTGCTTCCTGYKGCYYFGKNGKFVCEGESDEPKANMYPAM</sequence>
<organism>
    <name type="scientific">Solanum tuberosum</name>
    <name type="common">Potato</name>
    <dbReference type="NCBI Taxonomy" id="4113"/>
    <lineage>
        <taxon>Eukaryota</taxon>
        <taxon>Viridiplantae</taxon>
        <taxon>Streptophyta</taxon>
        <taxon>Embryophyta</taxon>
        <taxon>Tracheophyta</taxon>
        <taxon>Spermatophyta</taxon>
        <taxon>Magnoliopsida</taxon>
        <taxon>eudicotyledons</taxon>
        <taxon>Gunneridae</taxon>
        <taxon>Pentapetalae</taxon>
        <taxon>asterids</taxon>
        <taxon>lamiids</taxon>
        <taxon>Solanales</taxon>
        <taxon>Solanaceae</taxon>
        <taxon>Solanoideae</taxon>
        <taxon>Solaneae</taxon>
        <taxon>Solanum</taxon>
    </lineage>
</organism>
<accession>Q41488</accession>